<accession>A8A176</accession>
<gene>
    <name evidence="1" type="primary">cutC</name>
    <name type="ordered locus">EcHS_A1969</name>
</gene>
<comment type="subunit">
    <text evidence="1">Homodimer.</text>
</comment>
<comment type="subcellular location">
    <subcellularLocation>
        <location evidence="1">Cytoplasm</location>
    </subcellularLocation>
</comment>
<comment type="similarity">
    <text evidence="1">Belongs to the CutC family.</text>
</comment>
<comment type="caution">
    <text evidence="1">Once thought to be involved in copper homeostasis, experiments in E.coli have shown this is not the case.</text>
</comment>
<sequence length="248" mass="26641">MALLEICCYSMECALTAQQNGADRVELCAAPKEGGLTPSLGVLKSVRQRVTIPVHPIIRPRGGDFCYSDGEFAAILEDVRTVRELGFPGLVTGVLDVDGNVDMPRMEKIMAAAGPLAVTFHRAFDMCANPLNTLNNLAELGIARVLTSGQKSDALQGLSKIMELIAHRDAPIIMAGAGVRAENLHHFLDAGVLEVHSSAGAWQASPMRYRNQGLSMSSDAHADEYSRYVVDGAAVAEMKGIIERHQAK</sequence>
<keyword id="KW-0963">Cytoplasm</keyword>
<reference key="1">
    <citation type="journal article" date="2008" name="J. Bacteriol.">
        <title>The pangenome structure of Escherichia coli: comparative genomic analysis of E. coli commensal and pathogenic isolates.</title>
        <authorList>
            <person name="Rasko D.A."/>
            <person name="Rosovitz M.J."/>
            <person name="Myers G.S.A."/>
            <person name="Mongodin E.F."/>
            <person name="Fricke W.F."/>
            <person name="Gajer P."/>
            <person name="Crabtree J."/>
            <person name="Sebaihia M."/>
            <person name="Thomson N.R."/>
            <person name="Chaudhuri R."/>
            <person name="Henderson I.R."/>
            <person name="Sperandio V."/>
            <person name="Ravel J."/>
        </authorList>
    </citation>
    <scope>NUCLEOTIDE SEQUENCE [LARGE SCALE GENOMIC DNA]</scope>
    <source>
        <strain>HS</strain>
    </source>
</reference>
<evidence type="ECO:0000255" key="1">
    <source>
        <dbReference type="HAMAP-Rule" id="MF_00795"/>
    </source>
</evidence>
<dbReference type="EMBL" id="CP000802">
    <property type="protein sequence ID" value="ABV06280.1"/>
    <property type="molecule type" value="Genomic_DNA"/>
</dbReference>
<dbReference type="RefSeq" id="WP_001185727.1">
    <property type="nucleotide sequence ID" value="NC_009800.1"/>
</dbReference>
<dbReference type="SMR" id="A8A176"/>
<dbReference type="KEGG" id="ecx:EcHS_A1969"/>
<dbReference type="HOGENOM" id="CLU_050555_3_1_6"/>
<dbReference type="GO" id="GO:0005737">
    <property type="term" value="C:cytoplasm"/>
    <property type="evidence" value="ECO:0007669"/>
    <property type="project" value="UniProtKB-SubCell"/>
</dbReference>
<dbReference type="GO" id="GO:0005507">
    <property type="term" value="F:copper ion binding"/>
    <property type="evidence" value="ECO:0007669"/>
    <property type="project" value="TreeGrafter"/>
</dbReference>
<dbReference type="FunFam" id="3.20.20.380:FF:000001">
    <property type="entry name" value="Copper homeostasis protein CutC"/>
    <property type="match status" value="1"/>
</dbReference>
<dbReference type="Gene3D" id="3.20.20.380">
    <property type="entry name" value="Copper homeostasis (CutC) domain"/>
    <property type="match status" value="1"/>
</dbReference>
<dbReference type="HAMAP" id="MF_00795">
    <property type="entry name" value="CutC"/>
    <property type="match status" value="1"/>
</dbReference>
<dbReference type="InterPro" id="IPR005627">
    <property type="entry name" value="CutC-like"/>
</dbReference>
<dbReference type="InterPro" id="IPR036822">
    <property type="entry name" value="CutC-like_dom_sf"/>
</dbReference>
<dbReference type="NCBIfam" id="NF008603">
    <property type="entry name" value="PRK11572.1"/>
    <property type="match status" value="1"/>
</dbReference>
<dbReference type="PANTHER" id="PTHR12598">
    <property type="entry name" value="COPPER HOMEOSTASIS PROTEIN CUTC"/>
    <property type="match status" value="1"/>
</dbReference>
<dbReference type="PANTHER" id="PTHR12598:SF0">
    <property type="entry name" value="COPPER HOMEOSTASIS PROTEIN CUTC HOMOLOG"/>
    <property type="match status" value="1"/>
</dbReference>
<dbReference type="Pfam" id="PF03932">
    <property type="entry name" value="CutC"/>
    <property type="match status" value="1"/>
</dbReference>
<dbReference type="SUPFAM" id="SSF110395">
    <property type="entry name" value="CutC-like"/>
    <property type="match status" value="1"/>
</dbReference>
<protein>
    <recommendedName>
        <fullName evidence="1">PF03932 family protein CutC</fullName>
    </recommendedName>
</protein>
<name>CUTC_ECOHS</name>
<feature type="chain" id="PRO_1000062255" description="PF03932 family protein CutC">
    <location>
        <begin position="1"/>
        <end position="248"/>
    </location>
</feature>
<proteinExistence type="inferred from homology"/>
<organism>
    <name type="scientific">Escherichia coli O9:H4 (strain HS)</name>
    <dbReference type="NCBI Taxonomy" id="331112"/>
    <lineage>
        <taxon>Bacteria</taxon>
        <taxon>Pseudomonadati</taxon>
        <taxon>Pseudomonadota</taxon>
        <taxon>Gammaproteobacteria</taxon>
        <taxon>Enterobacterales</taxon>
        <taxon>Enterobacteriaceae</taxon>
        <taxon>Escherichia</taxon>
    </lineage>
</organism>